<comment type="subcellular location">
    <subcellularLocation>
        <location evidence="1">Vacuole</location>
    </subcellularLocation>
</comment>
<organism>
    <name type="scientific">Candida glabrata (strain ATCC 2001 / BCRC 20586 / JCM 3761 / NBRC 0622 / NRRL Y-65 / CBS 138)</name>
    <name type="common">Yeast</name>
    <name type="synonym">Nakaseomyces glabratus</name>
    <dbReference type="NCBI Taxonomy" id="284593"/>
    <lineage>
        <taxon>Eukaryota</taxon>
        <taxon>Fungi</taxon>
        <taxon>Dikarya</taxon>
        <taxon>Ascomycota</taxon>
        <taxon>Saccharomycotina</taxon>
        <taxon>Saccharomycetes</taxon>
        <taxon>Saccharomycetales</taxon>
        <taxon>Saccharomycetaceae</taxon>
        <taxon>Nakaseomyces</taxon>
    </lineage>
</organism>
<feature type="signal peptide" evidence="2">
    <location>
        <begin position="1"/>
        <end position="16"/>
    </location>
</feature>
<feature type="chain" id="PRO_0000008794" description="FAS1 domain-containing protein CAGL0M08734g">
    <location>
        <begin position="17"/>
        <end position="253"/>
    </location>
</feature>
<feature type="domain" description="FAS1" evidence="3">
    <location>
        <begin position="84"/>
        <end position="248"/>
    </location>
</feature>
<reference key="1">
    <citation type="journal article" date="2004" name="Nature">
        <title>Genome evolution in yeasts.</title>
        <authorList>
            <person name="Dujon B."/>
            <person name="Sherman D."/>
            <person name="Fischer G."/>
            <person name="Durrens P."/>
            <person name="Casaregola S."/>
            <person name="Lafontaine I."/>
            <person name="de Montigny J."/>
            <person name="Marck C."/>
            <person name="Neuveglise C."/>
            <person name="Talla E."/>
            <person name="Goffard N."/>
            <person name="Frangeul L."/>
            <person name="Aigle M."/>
            <person name="Anthouard V."/>
            <person name="Babour A."/>
            <person name="Barbe V."/>
            <person name="Barnay S."/>
            <person name="Blanchin S."/>
            <person name="Beckerich J.-M."/>
            <person name="Beyne E."/>
            <person name="Bleykasten C."/>
            <person name="Boisrame A."/>
            <person name="Boyer J."/>
            <person name="Cattolico L."/>
            <person name="Confanioleri F."/>
            <person name="de Daruvar A."/>
            <person name="Despons L."/>
            <person name="Fabre E."/>
            <person name="Fairhead C."/>
            <person name="Ferry-Dumazet H."/>
            <person name="Groppi A."/>
            <person name="Hantraye F."/>
            <person name="Hennequin C."/>
            <person name="Jauniaux N."/>
            <person name="Joyet P."/>
            <person name="Kachouri R."/>
            <person name="Kerrest A."/>
            <person name="Koszul R."/>
            <person name="Lemaire M."/>
            <person name="Lesur I."/>
            <person name="Ma L."/>
            <person name="Muller H."/>
            <person name="Nicaud J.-M."/>
            <person name="Nikolski M."/>
            <person name="Oztas S."/>
            <person name="Ozier-Kalogeropoulos O."/>
            <person name="Pellenz S."/>
            <person name="Potier S."/>
            <person name="Richard G.-F."/>
            <person name="Straub M.-L."/>
            <person name="Suleau A."/>
            <person name="Swennen D."/>
            <person name="Tekaia F."/>
            <person name="Wesolowski-Louvel M."/>
            <person name="Westhof E."/>
            <person name="Wirth B."/>
            <person name="Zeniou-Meyer M."/>
            <person name="Zivanovic Y."/>
            <person name="Bolotin-Fukuhara M."/>
            <person name="Thierry A."/>
            <person name="Bouchier C."/>
            <person name="Caudron B."/>
            <person name="Scarpelli C."/>
            <person name="Gaillardin C."/>
            <person name="Weissenbach J."/>
            <person name="Wincker P."/>
            <person name="Souciet J.-L."/>
        </authorList>
    </citation>
    <scope>NUCLEOTIDE SEQUENCE [LARGE SCALE GENOMIC DNA]</scope>
    <source>
        <strain>ATCC 2001 / BCRC 20586 / JCM 3761 / NBRC 0622 / NRRL Y-65 / CBS 138</strain>
    </source>
</reference>
<name>YFAS1_CANGA</name>
<dbReference type="EMBL" id="CR380959">
    <property type="protein sequence ID" value="CAG62701.1"/>
    <property type="molecule type" value="Genomic_DNA"/>
</dbReference>
<dbReference type="RefSeq" id="XP_449725.1">
    <property type="nucleotide sequence ID" value="XM_449725.1"/>
</dbReference>
<dbReference type="FunCoup" id="Q6FJ69">
    <property type="interactions" value="20"/>
</dbReference>
<dbReference type="STRING" id="284593.Q6FJ69"/>
<dbReference type="EnsemblFungi" id="CAGL0M08734g-T">
    <property type="protein sequence ID" value="CAGL0M08734g-T-p1"/>
    <property type="gene ID" value="CAGL0M08734g"/>
</dbReference>
<dbReference type="KEGG" id="cgr:2891286"/>
<dbReference type="CGD" id="CAL0136413">
    <property type="gene designation" value="CAGL0M08734g"/>
</dbReference>
<dbReference type="VEuPathDB" id="FungiDB:B1J91_M08734g"/>
<dbReference type="VEuPathDB" id="FungiDB:CAGL0M08734g"/>
<dbReference type="eggNOG" id="ENOG502S17N">
    <property type="taxonomic scope" value="Eukaryota"/>
</dbReference>
<dbReference type="HOGENOM" id="CLU_076942_0_0_1"/>
<dbReference type="InParanoid" id="Q6FJ69"/>
<dbReference type="OMA" id="IDSCLEW"/>
<dbReference type="Proteomes" id="UP000002428">
    <property type="component" value="Chromosome M"/>
</dbReference>
<dbReference type="GO" id="GO:0062040">
    <property type="term" value="C:fungal biofilm matrix"/>
    <property type="evidence" value="ECO:0000314"/>
    <property type="project" value="CGD"/>
</dbReference>
<dbReference type="GO" id="GO:0005773">
    <property type="term" value="C:vacuole"/>
    <property type="evidence" value="ECO:0007669"/>
    <property type="project" value="UniProtKB-SubCell"/>
</dbReference>
<dbReference type="Gene3D" id="2.30.180.10">
    <property type="entry name" value="FAS1 domain"/>
    <property type="match status" value="1"/>
</dbReference>
<dbReference type="InterPro" id="IPR036378">
    <property type="entry name" value="FAS1_dom_sf"/>
</dbReference>
<dbReference type="InterPro" id="IPR000782">
    <property type="entry name" value="FAS1_domain"/>
</dbReference>
<dbReference type="InterPro" id="IPR040200">
    <property type="entry name" value="Mug57-like"/>
</dbReference>
<dbReference type="PANTHER" id="PTHR28156">
    <property type="entry name" value="FAS1 DOMAIN-CONTAINING PROTEIN YDR262W"/>
    <property type="match status" value="1"/>
</dbReference>
<dbReference type="PANTHER" id="PTHR28156:SF1">
    <property type="entry name" value="FAS1 DOMAIN-CONTAINING PROTEIN YDR262W"/>
    <property type="match status" value="1"/>
</dbReference>
<dbReference type="SUPFAM" id="SSF82153">
    <property type="entry name" value="FAS1 domain"/>
    <property type="match status" value="1"/>
</dbReference>
<dbReference type="PROSITE" id="PS50213">
    <property type="entry name" value="FAS1"/>
    <property type="match status" value="1"/>
</dbReference>
<evidence type="ECO:0000250" key="1"/>
<evidence type="ECO:0000255" key="2"/>
<evidence type="ECO:0000255" key="3">
    <source>
        <dbReference type="PROSITE-ProRule" id="PRU00082"/>
    </source>
</evidence>
<keyword id="KW-1185">Reference proteome</keyword>
<keyword id="KW-0732">Signal</keyword>
<keyword id="KW-0926">Vacuole</keyword>
<protein>
    <recommendedName>
        <fullName>FAS1 domain-containing protein CAGL0M08734g</fullName>
    </recommendedName>
</protein>
<sequence>MVALKYVLVPVALVAAKNIVEMITFRDENGKLHRRLAPEEYRGGVLDGEESRLLQKRDLEMHPPVDLGVYFSNRPIHRTIDVPDIYLDSQISVLTELDIFASYSRNDEKSYDMFRDPESDLIVIAPTNAAITALAKKPWQFPMDIDTMEQAGSSERDIDNAIHNNIVNFVRSHVVAYQKDTKTSKDGTVLLQSKQYSMQHSNGKGGDVLLKREGEKYCVASVVDEVFHDVQNIYSTKNGVILVIDATLSRPGA</sequence>
<accession>Q6FJ69</accession>
<gene>
    <name type="ordered locus">CAGL0M08734g</name>
</gene>
<proteinExistence type="inferred from homology"/>